<feature type="chain" id="PRO_1000003213" description="Ribosome-recycling factor">
    <location>
        <begin position="1"/>
        <end position="185"/>
    </location>
</feature>
<sequence length="185" mass="20879">MINDILNEADGKMDKSVEATREEFAAIRAGRVNPSMFNKIVVDYYGSPTPLQQLASFTAPEARIILIAPYDQGAMHNILKAIRDSDLGVNPADDGKVIRCVFPELTEERRKEYIKISRHKAEEGRVAVRNLRRTAKQHLERLEKDGEVGQDDLTGAEKRLDGLTKKHTDAIDEMLKHKEAELLEV</sequence>
<proteinExistence type="inferred from homology"/>
<organism>
    <name type="scientific">Nocardioides sp. (strain ATCC BAA-499 / JS614)</name>
    <dbReference type="NCBI Taxonomy" id="196162"/>
    <lineage>
        <taxon>Bacteria</taxon>
        <taxon>Bacillati</taxon>
        <taxon>Actinomycetota</taxon>
        <taxon>Actinomycetes</taxon>
        <taxon>Propionibacteriales</taxon>
        <taxon>Nocardioidaceae</taxon>
        <taxon>Nocardioides</taxon>
    </lineage>
</organism>
<evidence type="ECO:0000255" key="1">
    <source>
        <dbReference type="HAMAP-Rule" id="MF_00040"/>
    </source>
</evidence>
<reference key="1">
    <citation type="submission" date="2006-12" db="EMBL/GenBank/DDBJ databases">
        <title>Complete sequence of chromosome 1 of Nocardioides sp. JS614.</title>
        <authorList>
            <person name="Copeland A."/>
            <person name="Lucas S."/>
            <person name="Lapidus A."/>
            <person name="Barry K."/>
            <person name="Detter J.C."/>
            <person name="Glavina del Rio T."/>
            <person name="Hammon N."/>
            <person name="Israni S."/>
            <person name="Dalin E."/>
            <person name="Tice H."/>
            <person name="Pitluck S."/>
            <person name="Thompson L.S."/>
            <person name="Brettin T."/>
            <person name="Bruce D."/>
            <person name="Han C."/>
            <person name="Tapia R."/>
            <person name="Schmutz J."/>
            <person name="Larimer F."/>
            <person name="Land M."/>
            <person name="Hauser L."/>
            <person name="Kyrpides N."/>
            <person name="Kim E."/>
            <person name="Mattes T."/>
            <person name="Gossett J."/>
            <person name="Richardson P."/>
        </authorList>
    </citation>
    <scope>NUCLEOTIDE SEQUENCE [LARGE SCALE GENOMIC DNA]</scope>
    <source>
        <strain>ATCC BAA-499 / JS614</strain>
    </source>
</reference>
<dbReference type="EMBL" id="CP000509">
    <property type="protein sequence ID" value="ABL82742.1"/>
    <property type="molecule type" value="Genomic_DNA"/>
</dbReference>
<dbReference type="SMR" id="A1SLQ7"/>
<dbReference type="STRING" id="196162.Noca_3240"/>
<dbReference type="KEGG" id="nca:Noca_3240"/>
<dbReference type="eggNOG" id="COG0233">
    <property type="taxonomic scope" value="Bacteria"/>
</dbReference>
<dbReference type="HOGENOM" id="CLU_073981_2_0_11"/>
<dbReference type="OrthoDB" id="9804006at2"/>
<dbReference type="Proteomes" id="UP000000640">
    <property type="component" value="Chromosome"/>
</dbReference>
<dbReference type="GO" id="GO:0005737">
    <property type="term" value="C:cytoplasm"/>
    <property type="evidence" value="ECO:0007669"/>
    <property type="project" value="UniProtKB-SubCell"/>
</dbReference>
<dbReference type="GO" id="GO:0043023">
    <property type="term" value="F:ribosomal large subunit binding"/>
    <property type="evidence" value="ECO:0007669"/>
    <property type="project" value="TreeGrafter"/>
</dbReference>
<dbReference type="GO" id="GO:0006415">
    <property type="term" value="P:translational termination"/>
    <property type="evidence" value="ECO:0007669"/>
    <property type="project" value="UniProtKB-UniRule"/>
</dbReference>
<dbReference type="CDD" id="cd00520">
    <property type="entry name" value="RRF"/>
    <property type="match status" value="1"/>
</dbReference>
<dbReference type="FunFam" id="1.10.132.20:FF:000001">
    <property type="entry name" value="Ribosome-recycling factor"/>
    <property type="match status" value="1"/>
</dbReference>
<dbReference type="FunFam" id="3.30.1360.40:FF:000001">
    <property type="entry name" value="Ribosome-recycling factor"/>
    <property type="match status" value="1"/>
</dbReference>
<dbReference type="Gene3D" id="3.30.1360.40">
    <property type="match status" value="1"/>
</dbReference>
<dbReference type="Gene3D" id="1.10.132.20">
    <property type="entry name" value="Ribosome-recycling factor"/>
    <property type="match status" value="1"/>
</dbReference>
<dbReference type="HAMAP" id="MF_00040">
    <property type="entry name" value="RRF"/>
    <property type="match status" value="1"/>
</dbReference>
<dbReference type="InterPro" id="IPR002661">
    <property type="entry name" value="Ribosome_recyc_fac"/>
</dbReference>
<dbReference type="InterPro" id="IPR023584">
    <property type="entry name" value="Ribosome_recyc_fac_dom"/>
</dbReference>
<dbReference type="InterPro" id="IPR036191">
    <property type="entry name" value="RRF_sf"/>
</dbReference>
<dbReference type="NCBIfam" id="TIGR00496">
    <property type="entry name" value="frr"/>
    <property type="match status" value="1"/>
</dbReference>
<dbReference type="PANTHER" id="PTHR20982:SF3">
    <property type="entry name" value="MITOCHONDRIAL RIBOSOME RECYCLING FACTOR PSEUDO 1"/>
    <property type="match status" value="1"/>
</dbReference>
<dbReference type="PANTHER" id="PTHR20982">
    <property type="entry name" value="RIBOSOME RECYCLING FACTOR"/>
    <property type="match status" value="1"/>
</dbReference>
<dbReference type="Pfam" id="PF01765">
    <property type="entry name" value="RRF"/>
    <property type="match status" value="1"/>
</dbReference>
<dbReference type="SUPFAM" id="SSF55194">
    <property type="entry name" value="Ribosome recycling factor, RRF"/>
    <property type="match status" value="1"/>
</dbReference>
<keyword id="KW-0963">Cytoplasm</keyword>
<keyword id="KW-0648">Protein biosynthesis</keyword>
<keyword id="KW-1185">Reference proteome</keyword>
<gene>
    <name evidence="1" type="primary">frr</name>
    <name type="ordered locus">Noca_3240</name>
</gene>
<accession>A1SLQ7</accession>
<protein>
    <recommendedName>
        <fullName evidence="1">Ribosome-recycling factor</fullName>
        <shortName evidence="1">RRF</shortName>
    </recommendedName>
    <alternativeName>
        <fullName evidence="1">Ribosome-releasing factor</fullName>
    </alternativeName>
</protein>
<comment type="function">
    <text evidence="1">Responsible for the release of ribosomes from messenger RNA at the termination of protein biosynthesis. May increase the efficiency of translation by recycling ribosomes from one round of translation to another.</text>
</comment>
<comment type="subcellular location">
    <subcellularLocation>
        <location evidence="1">Cytoplasm</location>
    </subcellularLocation>
</comment>
<comment type="similarity">
    <text evidence="1">Belongs to the RRF family.</text>
</comment>
<name>RRF_NOCSJ</name>